<accession>Q3E740</accession>
<accession>D6VV76</accession>
<feature type="chain" id="PRO_0000245376" description="Uncharacterized protein YGL258W-A">
    <location>
        <begin position="1"/>
        <end position="77"/>
    </location>
</feature>
<feature type="domain" description="Peptidase A1" evidence="1">
    <location>
        <begin position="1"/>
        <end position="77"/>
    </location>
</feature>
<protein>
    <recommendedName>
        <fullName>Uncharacterized protein YGL258W-A</fullName>
    </recommendedName>
</protein>
<organism>
    <name type="scientific">Saccharomyces cerevisiae (strain ATCC 204508 / S288c)</name>
    <name type="common">Baker's yeast</name>
    <dbReference type="NCBI Taxonomy" id="559292"/>
    <lineage>
        <taxon>Eukaryota</taxon>
        <taxon>Fungi</taxon>
        <taxon>Dikarya</taxon>
        <taxon>Ascomycota</taxon>
        <taxon>Saccharomycotina</taxon>
        <taxon>Saccharomycetes</taxon>
        <taxon>Saccharomycetales</taxon>
        <taxon>Saccharomycetaceae</taxon>
        <taxon>Saccharomyces</taxon>
    </lineage>
</organism>
<name>YG258_YEAST</name>
<dbReference type="EMBL" id="Z72780">
    <property type="status" value="NOT_ANNOTATED_CDS"/>
    <property type="molecule type" value="Genomic_DNA"/>
</dbReference>
<dbReference type="EMBL" id="BK006941">
    <property type="protein sequence ID" value="DAA07860.1"/>
    <property type="molecule type" value="Genomic_DNA"/>
</dbReference>
<dbReference type="RefSeq" id="NP_076890.1">
    <property type="nucleotide sequence ID" value="NM_001184473.1"/>
</dbReference>
<dbReference type="SMR" id="Q3E740"/>
<dbReference type="BioGRID" id="33020">
    <property type="interactions" value="22"/>
</dbReference>
<dbReference type="FunCoup" id="Q3E740">
    <property type="interactions" value="18"/>
</dbReference>
<dbReference type="STRING" id="4932.YGL258W-A"/>
<dbReference type="PaxDb" id="4932-YGL258W-A"/>
<dbReference type="EnsemblFungi" id="YGL258W-A_mRNA">
    <property type="protein sequence ID" value="YGL258W-A"/>
    <property type="gene ID" value="YGL258W-A"/>
</dbReference>
<dbReference type="GeneID" id="852633"/>
<dbReference type="KEGG" id="sce:YGL258W-A"/>
<dbReference type="AGR" id="SGD:S000007607"/>
<dbReference type="SGD" id="S000007607">
    <property type="gene designation" value="YGL258W-A"/>
</dbReference>
<dbReference type="VEuPathDB" id="FungiDB:YGL258W-A"/>
<dbReference type="eggNOG" id="KOG1339">
    <property type="taxonomic scope" value="Eukaryota"/>
</dbReference>
<dbReference type="HOGENOM" id="CLU_180257_0_0_1"/>
<dbReference type="InParanoid" id="Q3E740"/>
<dbReference type="OMA" id="MRQAYNT"/>
<dbReference type="OrthoDB" id="10298060at2759"/>
<dbReference type="BioCyc" id="YEAST:G3O-31006-MONOMER"/>
<dbReference type="BioGRID-ORCS" id="852633">
    <property type="hits" value="0 hits in 10 CRISPR screens"/>
</dbReference>
<dbReference type="PRO" id="PR:Q3E740"/>
<dbReference type="Proteomes" id="UP000002311">
    <property type="component" value="Chromosome VII"/>
</dbReference>
<dbReference type="RNAct" id="Q3E740">
    <property type="molecule type" value="protein"/>
</dbReference>
<dbReference type="Gene3D" id="2.40.70.10">
    <property type="entry name" value="Acid Proteases"/>
    <property type="match status" value="1"/>
</dbReference>
<dbReference type="InterPro" id="IPR033121">
    <property type="entry name" value="PEPTIDASE_A1"/>
</dbReference>
<dbReference type="InterPro" id="IPR021109">
    <property type="entry name" value="Peptidase_aspartic_dom_sf"/>
</dbReference>
<dbReference type="Pfam" id="PF00026">
    <property type="entry name" value="Asp"/>
    <property type="match status" value="1"/>
</dbReference>
<dbReference type="SUPFAM" id="SSF50630">
    <property type="entry name" value="Acid proteases"/>
    <property type="match status" value="1"/>
</dbReference>
<dbReference type="PROSITE" id="PS51767">
    <property type="entry name" value="PEPTIDASE_A1"/>
    <property type="match status" value="1"/>
</dbReference>
<proteinExistence type="predicted"/>
<reference key="1">
    <citation type="journal article" date="1997" name="Nature">
        <title>The nucleotide sequence of Saccharomyces cerevisiae chromosome VII.</title>
        <authorList>
            <person name="Tettelin H."/>
            <person name="Agostoni-Carbone M.L."/>
            <person name="Albermann K."/>
            <person name="Albers M."/>
            <person name="Arroyo J."/>
            <person name="Backes U."/>
            <person name="Barreiros T."/>
            <person name="Bertani I."/>
            <person name="Bjourson A.J."/>
            <person name="Brueckner M."/>
            <person name="Bruschi C.V."/>
            <person name="Carignani G."/>
            <person name="Castagnoli L."/>
            <person name="Cerdan E."/>
            <person name="Clemente M.L."/>
            <person name="Coblenz A."/>
            <person name="Coglievina M."/>
            <person name="Coissac E."/>
            <person name="Defoor E."/>
            <person name="Del Bino S."/>
            <person name="Delius H."/>
            <person name="Delneri D."/>
            <person name="de Wergifosse P."/>
            <person name="Dujon B."/>
            <person name="Durand P."/>
            <person name="Entian K.-D."/>
            <person name="Eraso P."/>
            <person name="Escribano V."/>
            <person name="Fabiani L."/>
            <person name="Fartmann B."/>
            <person name="Feroli F."/>
            <person name="Feuermann M."/>
            <person name="Frontali L."/>
            <person name="Garcia-Gonzalez M."/>
            <person name="Garcia-Saez M.I."/>
            <person name="Goffeau A."/>
            <person name="Guerreiro P."/>
            <person name="Hani J."/>
            <person name="Hansen M."/>
            <person name="Hebling U."/>
            <person name="Hernandez K."/>
            <person name="Heumann K."/>
            <person name="Hilger F."/>
            <person name="Hofmann B."/>
            <person name="Indge K.J."/>
            <person name="James C.M."/>
            <person name="Klima R."/>
            <person name="Koetter P."/>
            <person name="Kramer B."/>
            <person name="Kramer W."/>
            <person name="Lauquin G."/>
            <person name="Leuther H."/>
            <person name="Louis E.J."/>
            <person name="Maillier E."/>
            <person name="Marconi A."/>
            <person name="Martegani E."/>
            <person name="Mazon M.J."/>
            <person name="Mazzoni C."/>
            <person name="McReynolds A.D.K."/>
            <person name="Melchioretto P."/>
            <person name="Mewes H.-W."/>
            <person name="Minenkova O."/>
            <person name="Mueller-Auer S."/>
            <person name="Nawrocki A."/>
            <person name="Netter P."/>
            <person name="Neu R."/>
            <person name="Nombela C."/>
            <person name="Oliver S.G."/>
            <person name="Panzeri L."/>
            <person name="Paoluzi S."/>
            <person name="Plevani P."/>
            <person name="Portetelle D."/>
            <person name="Portillo F."/>
            <person name="Potier S."/>
            <person name="Purnelle B."/>
            <person name="Rieger M."/>
            <person name="Riles L."/>
            <person name="Rinaldi T."/>
            <person name="Robben J."/>
            <person name="Rodrigues-Pousada C."/>
            <person name="Rodriguez-Belmonte E."/>
            <person name="Rodriguez-Torres A.M."/>
            <person name="Rose M."/>
            <person name="Ruzzi M."/>
            <person name="Saliola M."/>
            <person name="Sanchez-Perez M."/>
            <person name="Schaefer B."/>
            <person name="Schaefer M."/>
            <person name="Scharfe M."/>
            <person name="Schmidheini T."/>
            <person name="Schreer A."/>
            <person name="Skala J."/>
            <person name="Souciet J.-L."/>
            <person name="Steensma H.Y."/>
            <person name="Talla E."/>
            <person name="Thierry A."/>
            <person name="Vandenbol M."/>
            <person name="van der Aart Q.J.M."/>
            <person name="Van Dyck L."/>
            <person name="Vanoni M."/>
            <person name="Verhasselt P."/>
            <person name="Voet M."/>
            <person name="Volckaert G."/>
            <person name="Wambutt R."/>
            <person name="Watson M.D."/>
            <person name="Weber N."/>
            <person name="Wedler E."/>
            <person name="Wedler H."/>
            <person name="Wipfli P."/>
            <person name="Wolf K."/>
            <person name="Wright L.F."/>
            <person name="Zaccaria P."/>
            <person name="Zimmermann M."/>
            <person name="Zollner A."/>
            <person name="Kleine K."/>
        </authorList>
    </citation>
    <scope>NUCLEOTIDE SEQUENCE [LARGE SCALE GENOMIC DNA]</scope>
    <source>
        <strain>ATCC 204508 / S288c</strain>
    </source>
</reference>
<reference key="2">
    <citation type="journal article" date="2014" name="G3 (Bethesda)">
        <title>The reference genome sequence of Saccharomyces cerevisiae: Then and now.</title>
        <authorList>
            <person name="Engel S.R."/>
            <person name="Dietrich F.S."/>
            <person name="Fisk D.G."/>
            <person name="Binkley G."/>
            <person name="Balakrishnan R."/>
            <person name="Costanzo M.C."/>
            <person name="Dwight S.S."/>
            <person name="Hitz B.C."/>
            <person name="Karra K."/>
            <person name="Nash R.S."/>
            <person name="Weng S."/>
            <person name="Wong E.D."/>
            <person name="Lloyd P."/>
            <person name="Skrzypek M.S."/>
            <person name="Miyasato S.R."/>
            <person name="Simison M."/>
            <person name="Cherry J.M."/>
        </authorList>
    </citation>
    <scope>GENOME REANNOTATION</scope>
    <source>
        <strain>ATCC 204508 / S288c</strain>
    </source>
</reference>
<reference key="3">
    <citation type="journal article" date="2000" name="FEBS Lett.">
        <title>Genomic exploration of the hemiascomycetous yeasts: 4. The genome of Saccharomyces cerevisiae revisited.</title>
        <authorList>
            <person name="Blandin G."/>
            <person name="Durrens P."/>
            <person name="Tekaia F."/>
            <person name="Aigle M."/>
            <person name="Bolotin-Fukuhara M."/>
            <person name="Bon E."/>
            <person name="Casaregola S."/>
            <person name="de Montigny J."/>
            <person name="Gaillardin C."/>
            <person name="Lepingle A."/>
            <person name="Llorente B."/>
            <person name="Malpertuy A."/>
            <person name="Neuveglise C."/>
            <person name="Ozier-Kalogeropoulos O."/>
            <person name="Perrin A."/>
            <person name="Potier S."/>
            <person name="Souciet J.-L."/>
            <person name="Talla E."/>
            <person name="Toffano-Nioche C."/>
            <person name="Wesolowski-Louvel M."/>
            <person name="Marck C."/>
            <person name="Dujon B."/>
        </authorList>
    </citation>
    <scope>GENOME REANNOTATION</scope>
</reference>
<evidence type="ECO:0000255" key="1">
    <source>
        <dbReference type="PROSITE-ProRule" id="PRU01103"/>
    </source>
</evidence>
<gene>
    <name type="ordered locus">YGL258W-A</name>
</gene>
<keyword id="KW-1185">Reference proteome</keyword>
<sequence>MAFERQGKIEKKISYSLFLNGPNVHFGSILFGAVDKSKYAEELCTHPMRQAYNTLDSNSRIIITVQSVAILDGKLVW</sequence>